<protein>
    <recommendedName>
        <fullName evidence="1">tRNA (guanine-N(1)-)-methyltransferase</fullName>
        <ecNumber evidence="1">2.1.1.228</ecNumber>
    </recommendedName>
    <alternativeName>
        <fullName evidence="1">M1G-methyltransferase</fullName>
    </alternativeName>
    <alternativeName>
        <fullName evidence="1">tRNA [GM37] methyltransferase</fullName>
    </alternativeName>
</protein>
<dbReference type="EC" id="2.1.1.228" evidence="1"/>
<dbReference type="EMBL" id="BX572593">
    <property type="protein sequence ID" value="CAE25686.1"/>
    <property type="molecule type" value="Genomic_DNA"/>
</dbReference>
<dbReference type="RefSeq" id="WP_011155810.1">
    <property type="nucleotide sequence ID" value="NZ_CP116810.1"/>
</dbReference>
<dbReference type="SMR" id="Q6ND67"/>
<dbReference type="STRING" id="258594.RPA0242"/>
<dbReference type="GeneID" id="66891249"/>
<dbReference type="eggNOG" id="COG0336">
    <property type="taxonomic scope" value="Bacteria"/>
</dbReference>
<dbReference type="HOGENOM" id="CLU_047363_0_1_5"/>
<dbReference type="PhylomeDB" id="Q6ND67"/>
<dbReference type="GO" id="GO:0005829">
    <property type="term" value="C:cytosol"/>
    <property type="evidence" value="ECO:0007669"/>
    <property type="project" value="TreeGrafter"/>
</dbReference>
<dbReference type="GO" id="GO:0052906">
    <property type="term" value="F:tRNA (guanine(37)-N1)-methyltransferase activity"/>
    <property type="evidence" value="ECO:0007669"/>
    <property type="project" value="UniProtKB-UniRule"/>
</dbReference>
<dbReference type="GO" id="GO:0002939">
    <property type="term" value="P:tRNA N1-guanine methylation"/>
    <property type="evidence" value="ECO:0007669"/>
    <property type="project" value="TreeGrafter"/>
</dbReference>
<dbReference type="CDD" id="cd18080">
    <property type="entry name" value="TrmD-like"/>
    <property type="match status" value="1"/>
</dbReference>
<dbReference type="FunFam" id="3.40.1280.10:FF:000001">
    <property type="entry name" value="tRNA (guanine-N(1)-)-methyltransferase"/>
    <property type="match status" value="1"/>
</dbReference>
<dbReference type="Gene3D" id="3.40.1280.10">
    <property type="match status" value="1"/>
</dbReference>
<dbReference type="Gene3D" id="1.10.1270.20">
    <property type="entry name" value="tRNA(m1g37)methyltransferase, domain 2"/>
    <property type="match status" value="1"/>
</dbReference>
<dbReference type="HAMAP" id="MF_00605">
    <property type="entry name" value="TrmD"/>
    <property type="match status" value="1"/>
</dbReference>
<dbReference type="InterPro" id="IPR029028">
    <property type="entry name" value="Alpha/beta_knot_MTases"/>
</dbReference>
<dbReference type="InterPro" id="IPR023148">
    <property type="entry name" value="tRNA_m1G_MeTrfase_C_sf"/>
</dbReference>
<dbReference type="InterPro" id="IPR002649">
    <property type="entry name" value="tRNA_m1G_MeTrfase_TrmD"/>
</dbReference>
<dbReference type="InterPro" id="IPR029026">
    <property type="entry name" value="tRNA_m1G_MTases_N"/>
</dbReference>
<dbReference type="InterPro" id="IPR016009">
    <property type="entry name" value="tRNA_MeTrfase_TRMD/TRM10"/>
</dbReference>
<dbReference type="NCBIfam" id="NF000648">
    <property type="entry name" value="PRK00026.1"/>
    <property type="match status" value="1"/>
</dbReference>
<dbReference type="NCBIfam" id="TIGR00088">
    <property type="entry name" value="trmD"/>
    <property type="match status" value="1"/>
</dbReference>
<dbReference type="PANTHER" id="PTHR46417">
    <property type="entry name" value="TRNA (GUANINE-N(1)-)-METHYLTRANSFERASE"/>
    <property type="match status" value="1"/>
</dbReference>
<dbReference type="PANTHER" id="PTHR46417:SF1">
    <property type="entry name" value="TRNA (GUANINE-N(1)-)-METHYLTRANSFERASE"/>
    <property type="match status" value="1"/>
</dbReference>
<dbReference type="Pfam" id="PF01746">
    <property type="entry name" value="tRNA_m1G_MT"/>
    <property type="match status" value="1"/>
</dbReference>
<dbReference type="PIRSF" id="PIRSF000386">
    <property type="entry name" value="tRNA_mtase"/>
    <property type="match status" value="1"/>
</dbReference>
<dbReference type="SUPFAM" id="SSF75217">
    <property type="entry name" value="alpha/beta knot"/>
    <property type="match status" value="1"/>
</dbReference>
<proteinExistence type="inferred from homology"/>
<evidence type="ECO:0000255" key="1">
    <source>
        <dbReference type="HAMAP-Rule" id="MF_00605"/>
    </source>
</evidence>
<evidence type="ECO:0000256" key="2">
    <source>
        <dbReference type="SAM" id="MobiDB-lite"/>
    </source>
</evidence>
<comment type="function">
    <text evidence="1">Specifically methylates guanosine-37 in various tRNAs.</text>
</comment>
<comment type="catalytic activity">
    <reaction evidence="1">
        <text>guanosine(37) in tRNA + S-adenosyl-L-methionine = N(1)-methylguanosine(37) in tRNA + S-adenosyl-L-homocysteine + H(+)</text>
        <dbReference type="Rhea" id="RHEA:36899"/>
        <dbReference type="Rhea" id="RHEA-COMP:10145"/>
        <dbReference type="Rhea" id="RHEA-COMP:10147"/>
        <dbReference type="ChEBI" id="CHEBI:15378"/>
        <dbReference type="ChEBI" id="CHEBI:57856"/>
        <dbReference type="ChEBI" id="CHEBI:59789"/>
        <dbReference type="ChEBI" id="CHEBI:73542"/>
        <dbReference type="ChEBI" id="CHEBI:74269"/>
        <dbReference type="EC" id="2.1.1.228"/>
    </reaction>
</comment>
<comment type="subunit">
    <text evidence="1">Homodimer.</text>
</comment>
<comment type="subcellular location">
    <subcellularLocation>
        <location evidence="1">Cytoplasm</location>
    </subcellularLocation>
</comment>
<comment type="similarity">
    <text evidence="1">Belongs to the RNA methyltransferase TrmD family.</text>
</comment>
<sequence>MTWRATVLTLFPEMFPGPLGVSLAGRALASGLWGLEARDIRDSATDRHRSVDDTPAGGGPGMVLRADVLAAAIDAVDAAADRPRLVMSPRGRPLTQARVAELAAGPGPLIVCGRFEGIDQRVIDARGLEEVSIGDYVLSGGEIAAMALIDACVRLLPGVMGKLESSTDESFSAGLLEYPQYTRPQTFEGRPIPEVLLSGDHGKVAAWRLGEAEALTRARRPDLWAARPAQTIRAKGESQKTPKNKTDG</sequence>
<organism>
    <name type="scientific">Rhodopseudomonas palustris (strain ATCC BAA-98 / CGA009)</name>
    <dbReference type="NCBI Taxonomy" id="258594"/>
    <lineage>
        <taxon>Bacteria</taxon>
        <taxon>Pseudomonadati</taxon>
        <taxon>Pseudomonadota</taxon>
        <taxon>Alphaproteobacteria</taxon>
        <taxon>Hyphomicrobiales</taxon>
        <taxon>Nitrobacteraceae</taxon>
        <taxon>Rhodopseudomonas</taxon>
    </lineage>
</organism>
<keyword id="KW-0963">Cytoplasm</keyword>
<keyword id="KW-0489">Methyltransferase</keyword>
<keyword id="KW-0949">S-adenosyl-L-methionine</keyword>
<keyword id="KW-0808">Transferase</keyword>
<keyword id="KW-0819">tRNA processing</keyword>
<accession>Q6ND67</accession>
<feature type="chain" id="PRO_0000060442" description="tRNA (guanine-N(1)-)-methyltransferase">
    <location>
        <begin position="1"/>
        <end position="248"/>
    </location>
</feature>
<feature type="region of interest" description="Disordered" evidence="2">
    <location>
        <begin position="226"/>
        <end position="248"/>
    </location>
</feature>
<feature type="compositionally biased region" description="Basic and acidic residues" evidence="2">
    <location>
        <begin position="234"/>
        <end position="248"/>
    </location>
</feature>
<feature type="binding site" evidence="1">
    <location>
        <position position="113"/>
    </location>
    <ligand>
        <name>S-adenosyl-L-methionine</name>
        <dbReference type="ChEBI" id="CHEBI:59789"/>
    </ligand>
</feature>
<feature type="binding site" evidence="1">
    <location>
        <begin position="133"/>
        <end position="138"/>
    </location>
    <ligand>
        <name>S-adenosyl-L-methionine</name>
        <dbReference type="ChEBI" id="CHEBI:59789"/>
    </ligand>
</feature>
<gene>
    <name evidence="1" type="primary">trmD</name>
    <name type="ordered locus">RPA0242</name>
</gene>
<name>TRMD_RHOPA</name>
<reference key="1">
    <citation type="journal article" date="2004" name="Nat. Biotechnol.">
        <title>Complete genome sequence of the metabolically versatile photosynthetic bacterium Rhodopseudomonas palustris.</title>
        <authorList>
            <person name="Larimer F.W."/>
            <person name="Chain P."/>
            <person name="Hauser L."/>
            <person name="Lamerdin J.E."/>
            <person name="Malfatti S."/>
            <person name="Do L."/>
            <person name="Land M.L."/>
            <person name="Pelletier D.A."/>
            <person name="Beatty J.T."/>
            <person name="Lang A.S."/>
            <person name="Tabita F.R."/>
            <person name="Gibson J.L."/>
            <person name="Hanson T.E."/>
            <person name="Bobst C."/>
            <person name="Torres y Torres J.L."/>
            <person name="Peres C."/>
            <person name="Harrison F.H."/>
            <person name="Gibson J."/>
            <person name="Harwood C.S."/>
        </authorList>
    </citation>
    <scope>NUCLEOTIDE SEQUENCE [LARGE SCALE GENOMIC DNA]</scope>
    <source>
        <strain>ATCC BAA-98 / CGA009</strain>
    </source>
</reference>